<gene>
    <name type="primary">BLCAP</name>
    <name type="ORF">QnpA-11526</name>
</gene>
<dbReference type="EMBL" id="AB169740">
    <property type="protein sequence ID" value="BAE01821.1"/>
    <property type="molecule type" value="mRNA"/>
</dbReference>
<dbReference type="STRING" id="9541.ENSMFAP00000012220"/>
<dbReference type="eggNOG" id="KOG4489">
    <property type="taxonomic scope" value="Eukaryota"/>
</dbReference>
<dbReference type="Proteomes" id="UP000233100">
    <property type="component" value="Unplaced"/>
</dbReference>
<dbReference type="GO" id="GO:0005737">
    <property type="term" value="C:cytoplasm"/>
    <property type="evidence" value="ECO:0007669"/>
    <property type="project" value="UniProtKB-SubCell"/>
</dbReference>
<dbReference type="GO" id="GO:0016020">
    <property type="term" value="C:membrane"/>
    <property type="evidence" value="ECO:0007669"/>
    <property type="project" value="UniProtKB-SubCell"/>
</dbReference>
<dbReference type="GO" id="GO:0005634">
    <property type="term" value="C:nucleus"/>
    <property type="evidence" value="ECO:0007669"/>
    <property type="project" value="UniProtKB-SubCell"/>
</dbReference>
<dbReference type="GO" id="GO:0006915">
    <property type="term" value="P:apoptotic process"/>
    <property type="evidence" value="ECO:0007669"/>
    <property type="project" value="UniProtKB-KW"/>
</dbReference>
<dbReference type="InterPro" id="IPR009598">
    <property type="entry name" value="BCALP"/>
</dbReference>
<dbReference type="PANTHER" id="PTHR13259">
    <property type="entry name" value="BLADDER CANCER 10 KD PROTEIN HOMOLOG"/>
    <property type="match status" value="1"/>
</dbReference>
<dbReference type="PANTHER" id="PTHR13259:SF1">
    <property type="entry name" value="BLADDER CANCER-ASSOCIATED PROTEIN"/>
    <property type="match status" value="1"/>
</dbReference>
<dbReference type="Pfam" id="PF06726">
    <property type="entry name" value="BC10"/>
    <property type="match status" value="1"/>
</dbReference>
<dbReference type="SMART" id="SM01396">
    <property type="entry name" value="BC10"/>
    <property type="match status" value="1"/>
</dbReference>
<protein>
    <recommendedName>
        <fullName evidence="3">Apoptosis inducing factor BLCAP</fullName>
    </recommendedName>
    <alternativeName>
        <fullName>Bladder cancer-associated protein</fullName>
    </alternativeName>
</protein>
<keyword id="KW-0053">Apoptosis</keyword>
<keyword id="KW-0131">Cell cycle</keyword>
<keyword id="KW-0963">Cytoplasm</keyword>
<keyword id="KW-0472">Membrane</keyword>
<keyword id="KW-0539">Nucleus</keyword>
<keyword id="KW-1185">Reference proteome</keyword>
<keyword id="KW-0812">Transmembrane</keyword>
<keyword id="KW-1133">Transmembrane helix</keyword>
<keyword id="KW-0043">Tumor suppressor</keyword>
<proteinExistence type="inferred from homology"/>
<name>BLCAP_MACFA</name>
<reference key="1">
    <citation type="submission" date="2005-06" db="EMBL/GenBank/DDBJ databases">
        <title>DNA sequences of macaque genes expressed in brain or testis and its evolutionary implications.</title>
        <authorList>
            <consortium name="International consortium for macaque cDNA sequencing and analysis"/>
        </authorList>
    </citation>
    <scope>NUCLEOTIDE SEQUENCE [LARGE SCALE MRNA]</scope>
    <source>
        <tissue>Parietal cortex</tissue>
    </source>
</reference>
<evidence type="ECO:0000250" key="1">
    <source>
        <dbReference type="UniProtKB" id="P62952"/>
    </source>
</evidence>
<evidence type="ECO:0000255" key="2"/>
<evidence type="ECO:0000305" key="3"/>
<comment type="function">
    <text evidence="1">Acts as a tumor suppressor; induces growth arrest at G(1)/S checkpoint and apoptosis via RB1-dependent and p53/TP53- and NF-kappa-B-independent mechanisms. Modulates expression of genes involved in the regulation of proliferation, cell cycle and apoptosis.</text>
</comment>
<comment type="subunit">
    <text evidence="1">Interacts with RB1 (phosphorylated and unphosphorylated) (By similarity). Interacts with STAT3; the interaction is promoted by cell stimulation with IL6 and phosphorylation of STAT3 (By similarity).</text>
</comment>
<comment type="subcellular location">
    <subcellularLocation>
        <location evidence="1">Cytoplasm</location>
    </subcellularLocation>
    <subcellularLocation>
        <location evidence="1">Nucleus</location>
    </subcellularLocation>
    <subcellularLocation>
        <location evidence="2">Membrane</location>
        <topology evidence="2">Multi-pass membrane protein</topology>
    </subcellularLocation>
</comment>
<comment type="similarity">
    <text evidence="3">Belongs to the BLCAP family.</text>
</comment>
<accession>Q4R504</accession>
<sequence length="87" mass="9903">MYCLQWLLPVLLIPKPLNPALWFSHSMFMGFYLLNFLLERKPCTICALVFLAALFLICYSCWGNCFLYHCSDSPLPESAHDPGVVGT</sequence>
<organism>
    <name type="scientific">Macaca fascicularis</name>
    <name type="common">Crab-eating macaque</name>
    <name type="synonym">Cynomolgus monkey</name>
    <dbReference type="NCBI Taxonomy" id="9541"/>
    <lineage>
        <taxon>Eukaryota</taxon>
        <taxon>Metazoa</taxon>
        <taxon>Chordata</taxon>
        <taxon>Craniata</taxon>
        <taxon>Vertebrata</taxon>
        <taxon>Euteleostomi</taxon>
        <taxon>Mammalia</taxon>
        <taxon>Eutheria</taxon>
        <taxon>Euarchontoglires</taxon>
        <taxon>Primates</taxon>
        <taxon>Haplorrhini</taxon>
        <taxon>Catarrhini</taxon>
        <taxon>Cercopithecidae</taxon>
        <taxon>Cercopithecinae</taxon>
        <taxon>Macaca</taxon>
    </lineage>
</organism>
<feature type="chain" id="PRO_0000295133" description="Apoptosis inducing factor BLCAP">
    <location>
        <begin position="1"/>
        <end position="87"/>
    </location>
</feature>
<feature type="transmembrane region" description="Helical" evidence="2">
    <location>
        <begin position="19"/>
        <end position="39"/>
    </location>
</feature>
<feature type="transmembrane region" description="Helical" evidence="2">
    <location>
        <begin position="43"/>
        <end position="63"/>
    </location>
</feature>